<keyword id="KW-0159">Chromosome partition</keyword>
<keyword id="KW-0238">DNA-binding</keyword>
<dbReference type="EMBL" id="CP000053">
    <property type="protein sequence ID" value="AAY60967.1"/>
    <property type="molecule type" value="Genomic_DNA"/>
</dbReference>
<dbReference type="SMR" id="Q4UN91"/>
<dbReference type="STRING" id="315456.RF_0116"/>
<dbReference type="KEGG" id="rfe:RF_0116"/>
<dbReference type="eggNOG" id="COG1475">
    <property type="taxonomic scope" value="Bacteria"/>
</dbReference>
<dbReference type="HOGENOM" id="CLU_023853_0_0_5"/>
<dbReference type="OrthoDB" id="9802051at2"/>
<dbReference type="Proteomes" id="UP000008548">
    <property type="component" value="Chromosome"/>
</dbReference>
<dbReference type="GO" id="GO:0005694">
    <property type="term" value="C:chromosome"/>
    <property type="evidence" value="ECO:0007669"/>
    <property type="project" value="TreeGrafter"/>
</dbReference>
<dbReference type="GO" id="GO:0003677">
    <property type="term" value="F:DNA binding"/>
    <property type="evidence" value="ECO:0007669"/>
    <property type="project" value="UniProtKB-KW"/>
</dbReference>
<dbReference type="GO" id="GO:0007059">
    <property type="term" value="P:chromosome segregation"/>
    <property type="evidence" value="ECO:0007669"/>
    <property type="project" value="UniProtKB-KW"/>
</dbReference>
<dbReference type="GO" id="GO:0045881">
    <property type="term" value="P:positive regulation of sporulation resulting in formation of a cellular spore"/>
    <property type="evidence" value="ECO:0007669"/>
    <property type="project" value="TreeGrafter"/>
</dbReference>
<dbReference type="CDD" id="cd16393">
    <property type="entry name" value="SPO0J_N"/>
    <property type="match status" value="1"/>
</dbReference>
<dbReference type="FunFam" id="1.10.10.2830:FF:000001">
    <property type="entry name" value="Chromosome partitioning protein ParB"/>
    <property type="match status" value="1"/>
</dbReference>
<dbReference type="FunFam" id="3.90.1530.30:FF:000001">
    <property type="entry name" value="Chromosome partitioning protein ParB"/>
    <property type="match status" value="1"/>
</dbReference>
<dbReference type="Gene3D" id="1.10.10.2830">
    <property type="match status" value="1"/>
</dbReference>
<dbReference type="Gene3D" id="3.90.1530.30">
    <property type="match status" value="1"/>
</dbReference>
<dbReference type="InterPro" id="IPR050336">
    <property type="entry name" value="Chromosome_partition/occlusion"/>
</dbReference>
<dbReference type="InterPro" id="IPR041468">
    <property type="entry name" value="HTH_ParB/Spo0J"/>
</dbReference>
<dbReference type="InterPro" id="IPR004437">
    <property type="entry name" value="ParB/RepB/Spo0J"/>
</dbReference>
<dbReference type="InterPro" id="IPR003115">
    <property type="entry name" value="ParB/Sulfiredoxin_dom"/>
</dbReference>
<dbReference type="InterPro" id="IPR036086">
    <property type="entry name" value="ParB/Sulfiredoxin_sf"/>
</dbReference>
<dbReference type="InterPro" id="IPR057240">
    <property type="entry name" value="ParB_dimer_C"/>
</dbReference>
<dbReference type="NCBIfam" id="TIGR00180">
    <property type="entry name" value="parB_part"/>
    <property type="match status" value="1"/>
</dbReference>
<dbReference type="PANTHER" id="PTHR33375">
    <property type="entry name" value="CHROMOSOME-PARTITIONING PROTEIN PARB-RELATED"/>
    <property type="match status" value="1"/>
</dbReference>
<dbReference type="PANTHER" id="PTHR33375:SF1">
    <property type="entry name" value="CHROMOSOME-PARTITIONING PROTEIN PARB-RELATED"/>
    <property type="match status" value="1"/>
</dbReference>
<dbReference type="Pfam" id="PF17762">
    <property type="entry name" value="HTH_ParB"/>
    <property type="match status" value="1"/>
</dbReference>
<dbReference type="Pfam" id="PF23552">
    <property type="entry name" value="ParB_dimer"/>
    <property type="match status" value="1"/>
</dbReference>
<dbReference type="Pfam" id="PF02195">
    <property type="entry name" value="ParBc"/>
    <property type="match status" value="1"/>
</dbReference>
<dbReference type="SMART" id="SM00470">
    <property type="entry name" value="ParB"/>
    <property type="match status" value="1"/>
</dbReference>
<dbReference type="SUPFAM" id="SSF109709">
    <property type="entry name" value="KorB DNA-binding domain-like"/>
    <property type="match status" value="1"/>
</dbReference>
<dbReference type="SUPFAM" id="SSF110849">
    <property type="entry name" value="ParB/Sulfiredoxin"/>
    <property type="match status" value="1"/>
</dbReference>
<reference key="1">
    <citation type="journal article" date="2005" name="PLoS Biol.">
        <title>The genome sequence of Rickettsia felis identifies the first putative conjugative plasmid in an obligate intracellular parasite.</title>
        <authorList>
            <person name="Ogata H."/>
            <person name="Renesto P."/>
            <person name="Audic S."/>
            <person name="Robert C."/>
            <person name="Blanc G."/>
            <person name="Fournier P.-E."/>
            <person name="Parinello H."/>
            <person name="Claverie J.-M."/>
            <person name="Raoult D."/>
        </authorList>
    </citation>
    <scope>NUCLEOTIDE SEQUENCE [LARGE SCALE GENOMIC DNA]</scope>
    <source>
        <strain>ATCC VR-1525 / URRWXCal2</strain>
    </source>
</reference>
<evidence type="ECO:0000250" key="1"/>
<evidence type="ECO:0000305" key="2"/>
<comment type="function">
    <text evidence="1">Involved in chromosome partition. Localize to both poles of the predivisional cell following completion of DNA replication. Binds to the DNA origin of replication (By similarity).</text>
</comment>
<comment type="similarity">
    <text evidence="2">Belongs to the ParB family.</text>
</comment>
<organism>
    <name type="scientific">Rickettsia felis (strain ATCC VR-1525 / URRWXCal2)</name>
    <name type="common">Rickettsia azadi</name>
    <dbReference type="NCBI Taxonomy" id="315456"/>
    <lineage>
        <taxon>Bacteria</taxon>
        <taxon>Pseudomonadati</taxon>
        <taxon>Pseudomonadota</taxon>
        <taxon>Alphaproteobacteria</taxon>
        <taxon>Rickettsiales</taxon>
        <taxon>Rickettsiaceae</taxon>
        <taxon>Rickettsieae</taxon>
        <taxon>Rickettsia</taxon>
        <taxon>spotted fever group</taxon>
    </lineage>
</organism>
<gene>
    <name type="primary">parB</name>
    <name type="ordered locus">RF_0116</name>
</gene>
<proteinExistence type="inferred from homology"/>
<accession>Q4UN91</accession>
<feature type="chain" id="PRO_0000291838" description="Probable chromosome-partitioning protein ParB">
    <location>
        <begin position="1"/>
        <end position="286"/>
    </location>
</feature>
<protein>
    <recommendedName>
        <fullName>Probable chromosome-partitioning protein ParB</fullName>
    </recommendedName>
</protein>
<sequence length="286" mass="32907">MAKNKGLGRGLSSLLGEEVISIESEIIQIINIDKIRPNENQPRKNFEYDKIKELADSILNNGLLQPIIVDNNFQIIAGERRWRACKLAKVLEIPVIIKNLDARESMEIALIENIQRTDLTVMEEARGFKYLVENFNYTTEKLAERLGKSRSHIANLLRLNNLPQSIQDKVNENILSMGQARCLINHEHAEVMADHIISNDLNVRQTEELVRQWYKNEYTKSPNNNNKVGKRFLKDNATDNDLESLVKVLSEKFGIKVTIENYSLGGKLIFHYKNLEELDLILLKLN</sequence>
<name>PARB_RICFE</name>